<protein>
    <recommendedName>
        <fullName>Outer membrane usher protein FaeD</fullName>
    </recommendedName>
</protein>
<name>FAED_ECOLX</name>
<evidence type="ECO:0000250" key="1"/>
<evidence type="ECO:0000255" key="2"/>
<evidence type="ECO:0000305" key="3"/>
<comment type="function">
    <text>Involved in the export and assembly of K88ab fimbrial subunits across the outer membrane.</text>
</comment>
<comment type="subcellular location">
    <subcellularLocation>
        <location evidence="1">Cell outer membrane</location>
        <topology evidence="1">Multi-pass membrane protein</topology>
    </subcellularLocation>
</comment>
<comment type="similarity">
    <text evidence="3">Belongs to the fimbrial export usher family.</text>
</comment>
<organism>
    <name type="scientific">Escherichia coli</name>
    <dbReference type="NCBI Taxonomy" id="562"/>
    <lineage>
        <taxon>Bacteria</taxon>
        <taxon>Pseudomonadati</taxon>
        <taxon>Pseudomonadota</taxon>
        <taxon>Gammaproteobacteria</taxon>
        <taxon>Enterobacterales</taxon>
        <taxon>Enterobacteriaceae</taxon>
        <taxon>Escherichia</taxon>
    </lineage>
</organism>
<dbReference type="EMBL" id="X03675">
    <property type="protein sequence ID" value="CAA27310.1"/>
    <property type="molecule type" value="Genomic_DNA"/>
</dbReference>
<dbReference type="EMBL" id="X56002">
    <property type="protein sequence ID" value="CAA39476.1"/>
    <property type="molecule type" value="Genomic_DNA"/>
</dbReference>
<dbReference type="EMBL" id="X56003">
    <property type="protein sequence ID" value="CAA39477.1"/>
    <property type="molecule type" value="Genomic_DNA"/>
</dbReference>
<dbReference type="PIR" id="S24931">
    <property type="entry name" value="MMECOF"/>
</dbReference>
<dbReference type="SMR" id="P06970"/>
<dbReference type="TCDB" id="1.B.11.1.1">
    <property type="family name" value="the outer membrane fimbrial usher porin (fup) family"/>
</dbReference>
<dbReference type="GO" id="GO:0009279">
    <property type="term" value="C:cell outer membrane"/>
    <property type="evidence" value="ECO:0007669"/>
    <property type="project" value="UniProtKB-SubCell"/>
</dbReference>
<dbReference type="GO" id="GO:0015473">
    <property type="term" value="F:fimbrial usher porin activity"/>
    <property type="evidence" value="ECO:0007669"/>
    <property type="project" value="InterPro"/>
</dbReference>
<dbReference type="GO" id="GO:0009297">
    <property type="term" value="P:pilus assembly"/>
    <property type="evidence" value="ECO:0007669"/>
    <property type="project" value="InterPro"/>
</dbReference>
<dbReference type="Gene3D" id="2.60.40.3110">
    <property type="match status" value="1"/>
</dbReference>
<dbReference type="Gene3D" id="3.10.20.410">
    <property type="match status" value="1"/>
</dbReference>
<dbReference type="Gene3D" id="2.60.40.2610">
    <property type="entry name" value="Outer membrane usher protein FimD, plug domain"/>
    <property type="match status" value="1"/>
</dbReference>
<dbReference type="InterPro" id="IPR000015">
    <property type="entry name" value="Fimb_usher"/>
</dbReference>
<dbReference type="InterPro" id="IPR018030">
    <property type="entry name" value="Fimbrial_membr_usher_CS"/>
</dbReference>
<dbReference type="InterPro" id="IPR042186">
    <property type="entry name" value="FimD_plug_dom"/>
</dbReference>
<dbReference type="InterPro" id="IPR025885">
    <property type="entry name" value="PapC_N"/>
</dbReference>
<dbReference type="InterPro" id="IPR037224">
    <property type="entry name" value="PapC_N_sf"/>
</dbReference>
<dbReference type="NCBIfam" id="NF011760">
    <property type="entry name" value="PRK15213.1"/>
    <property type="match status" value="1"/>
</dbReference>
<dbReference type="PANTHER" id="PTHR30451:SF21">
    <property type="entry name" value="FIMBRIAL USHER DOMAIN-CONTAINING PROTEIN YDET-RELATED"/>
    <property type="match status" value="1"/>
</dbReference>
<dbReference type="PANTHER" id="PTHR30451">
    <property type="entry name" value="OUTER MEMBRANE USHER PROTEIN"/>
    <property type="match status" value="1"/>
</dbReference>
<dbReference type="Pfam" id="PF13954">
    <property type="entry name" value="PapC_N"/>
    <property type="match status" value="1"/>
</dbReference>
<dbReference type="Pfam" id="PF00577">
    <property type="entry name" value="Usher"/>
    <property type="match status" value="1"/>
</dbReference>
<dbReference type="SUPFAM" id="SSF141729">
    <property type="entry name" value="FimD N-terminal domain-like"/>
    <property type="match status" value="1"/>
</dbReference>
<dbReference type="PROSITE" id="PS01151">
    <property type="entry name" value="FIMBRIAL_USHER"/>
    <property type="match status" value="1"/>
</dbReference>
<geneLocation type="plasmid">
    <name>pFM205</name>
</geneLocation>
<gene>
    <name type="primary">faeD</name>
</gene>
<sequence>MKKYVTTKSVQPVAFRLTTLSLVMSAVLGSASVIAGEKLDMSFIQGGGGVNPEVWAALNGSYAPGRYLVDLSLNGKEAGKQILDVTPQDSNELCLTEAWLTKAGVYVSADYFREGYDATRQCYVLTKAPSVKVDFDVSTQSLALSIPQKGLVKMPENVDWDYGTSAFRVNYNANANTGRNNTSAFGSADLKANIGHWVVSSSATASGGDSGDNSTTINMFTATRAIRALSADLAVGKTSTGDSLLGSTGTYGVSLSRNNSMKPGNLGYTPVFSGIANGPSRVTLTQNGRLLHSEMVPAGPFSITDVPLYTSGDVTMKITGEDGRDEVQNFPLSVMAGQLSPGQHEFSVAAGLPDDDSDLKGGVFAASYGYGLDGLTLRAGGVFNQDWQGASAGVVAGLGYLGAVSADGAYATAKYRDGSHSGNKVQLSWSKQLETTNTGLRVSWSRQSEEYEGMSSFDPTELWSQSNHGRRTKDEWNAGISQPVGGLFSLSVSGWQRSYYPASMTGSYRYSDDNGKETGITGSLSTQIKGVSLNLGWSGSRNSRGENNWSASASVSVPFTLFDRRYSSSASVSTSKGGGTGFSTGVSGSLNDRFSYGLGGGRDGDGGTSSYLNASYSGDRAYLNGVLNHSQSGGTSGSVSVSGSVLAVPAAKDIMFSRTTGDTVAVVNVKDTPGVKVTSGDGQTDSDGNLVVPLNSYDWNTVTIDTGTLPLSTELTNTSQKVVPTDKAVVWMPFDALKVKRYLLQVKQRDGEFVPGGTWARDSKNTPLGFVANNGVLMINTVDAPGDITLGQCRIPAARLQDTEKLQEITCE</sequence>
<accession>P06970</accession>
<feature type="signal peptide">
    <location>
        <begin position="1"/>
        <end position="35"/>
    </location>
</feature>
<feature type="chain" id="PRO_0000009308" description="Outer membrane usher protein FaeD">
    <location>
        <begin position="36"/>
        <end position="812"/>
    </location>
</feature>
<feature type="disulfide bond" evidence="2">
    <location>
        <begin position="793"/>
        <end position="811"/>
    </location>
</feature>
<reference key="1">
    <citation type="journal article" date="1986" name="Nucleic Acids Res.">
        <title>Regulation and structure of an Escherichia coli gene coding for an outer membrane protein involved in export of K88ab fimbrial subunits.</title>
        <authorList>
            <person name="Mooi F.R."/>
            <person name="Claassen I."/>
            <person name="Bakker D."/>
            <person name="Kuipers H."/>
            <person name="de Graaf F.K."/>
        </authorList>
    </citation>
    <scope>NUCLEOTIDE SEQUENCE [GENOMIC DNA]</scope>
</reference>
<reference key="2">
    <citation type="submission" date="1990-10" db="EMBL/GenBank/DDBJ databases">
        <authorList>
            <person name="Oudega B."/>
        </authorList>
    </citation>
    <scope>SEQUENCE REVISION</scope>
</reference>
<reference key="3">
    <citation type="journal article" date="1995" name="Mol. Microbiol.">
        <title>Subcellular localization and topology of the K88 usher FaeD in Escherichia coli.</title>
        <authorList>
            <person name="Valent Q.A."/>
            <person name="Zaal J."/>
            <person name="de Graaf F.K."/>
            <person name="Oudega B."/>
        </authorList>
    </citation>
    <scope>NUCLEOTIDE SEQUENCE [GENOMIC DNA]</scope>
</reference>
<reference key="4">
    <citation type="journal article" date="1991" name="Mol. Microbiol.">
        <title>Structure and function of periplasmic chaperone-like proteins involved in the biosynthesis of K88 and K99 fimbriae in enterotoxigenic Escherichia coli.</title>
        <authorList>
            <person name="Bakker D."/>
            <person name="Vader C.E.M."/>
            <person name="Roosendaal B."/>
            <person name="Mooi F.R."/>
            <person name="Oudega B."/>
            <person name="de Graaf F.K."/>
        </authorList>
    </citation>
    <scope>NUCLEOTIDE SEQUENCE [GENOMIC DNA] OF 794-812</scope>
</reference>
<keyword id="KW-0998">Cell outer membrane</keyword>
<keyword id="KW-1015">Disulfide bond</keyword>
<keyword id="KW-1029">Fimbrium biogenesis</keyword>
<keyword id="KW-0472">Membrane</keyword>
<keyword id="KW-0614">Plasmid</keyword>
<keyword id="KW-0732">Signal</keyword>
<keyword id="KW-0812">Transmembrane</keyword>
<keyword id="KW-1134">Transmembrane beta strand</keyword>
<keyword id="KW-0813">Transport</keyword>
<proteinExistence type="inferred from homology"/>